<reference key="1">
    <citation type="journal article" date="2005" name="PLoS Biol.">
        <title>The genomes of Oryza sativa: a history of duplications.</title>
        <authorList>
            <person name="Yu J."/>
            <person name="Wang J."/>
            <person name="Lin W."/>
            <person name="Li S."/>
            <person name="Li H."/>
            <person name="Zhou J."/>
            <person name="Ni P."/>
            <person name="Dong W."/>
            <person name="Hu S."/>
            <person name="Zeng C."/>
            <person name="Zhang J."/>
            <person name="Zhang Y."/>
            <person name="Li R."/>
            <person name="Xu Z."/>
            <person name="Li S."/>
            <person name="Li X."/>
            <person name="Zheng H."/>
            <person name="Cong L."/>
            <person name="Lin L."/>
            <person name="Yin J."/>
            <person name="Geng J."/>
            <person name="Li G."/>
            <person name="Shi J."/>
            <person name="Liu J."/>
            <person name="Lv H."/>
            <person name="Li J."/>
            <person name="Wang J."/>
            <person name="Deng Y."/>
            <person name="Ran L."/>
            <person name="Shi X."/>
            <person name="Wang X."/>
            <person name="Wu Q."/>
            <person name="Li C."/>
            <person name="Ren X."/>
            <person name="Wang J."/>
            <person name="Wang X."/>
            <person name="Li D."/>
            <person name="Liu D."/>
            <person name="Zhang X."/>
            <person name="Ji Z."/>
            <person name="Zhao W."/>
            <person name="Sun Y."/>
            <person name="Zhang Z."/>
            <person name="Bao J."/>
            <person name="Han Y."/>
            <person name="Dong L."/>
            <person name="Ji J."/>
            <person name="Chen P."/>
            <person name="Wu S."/>
            <person name="Liu J."/>
            <person name="Xiao Y."/>
            <person name="Bu D."/>
            <person name="Tan J."/>
            <person name="Yang L."/>
            <person name="Ye C."/>
            <person name="Zhang J."/>
            <person name="Xu J."/>
            <person name="Zhou Y."/>
            <person name="Yu Y."/>
            <person name="Zhang B."/>
            <person name="Zhuang S."/>
            <person name="Wei H."/>
            <person name="Liu B."/>
            <person name="Lei M."/>
            <person name="Yu H."/>
            <person name="Li Y."/>
            <person name="Xu H."/>
            <person name="Wei S."/>
            <person name="He X."/>
            <person name="Fang L."/>
            <person name="Zhang Z."/>
            <person name="Zhang Y."/>
            <person name="Huang X."/>
            <person name="Su Z."/>
            <person name="Tong W."/>
            <person name="Li J."/>
            <person name="Tong Z."/>
            <person name="Li S."/>
            <person name="Ye J."/>
            <person name="Wang L."/>
            <person name="Fang L."/>
            <person name="Lei T."/>
            <person name="Chen C.-S."/>
            <person name="Chen H.-C."/>
            <person name="Xu Z."/>
            <person name="Li H."/>
            <person name="Huang H."/>
            <person name="Zhang F."/>
            <person name="Xu H."/>
            <person name="Li N."/>
            <person name="Zhao C."/>
            <person name="Li S."/>
            <person name="Dong L."/>
            <person name="Huang Y."/>
            <person name="Li L."/>
            <person name="Xi Y."/>
            <person name="Qi Q."/>
            <person name="Li W."/>
            <person name="Zhang B."/>
            <person name="Hu W."/>
            <person name="Zhang Y."/>
            <person name="Tian X."/>
            <person name="Jiao Y."/>
            <person name="Liang X."/>
            <person name="Jin J."/>
            <person name="Gao L."/>
            <person name="Zheng W."/>
            <person name="Hao B."/>
            <person name="Liu S.-M."/>
            <person name="Wang W."/>
            <person name="Yuan L."/>
            <person name="Cao M."/>
            <person name="McDermott J."/>
            <person name="Samudrala R."/>
            <person name="Wang J."/>
            <person name="Wong G.K.-S."/>
            <person name="Yang H."/>
        </authorList>
    </citation>
    <scope>NUCLEOTIDE SEQUENCE [LARGE SCALE GENOMIC DNA]</scope>
    <source>
        <strain>cv. 93-11</strain>
    </source>
</reference>
<evidence type="ECO:0000250" key="1"/>
<evidence type="ECO:0000255" key="2">
    <source>
        <dbReference type="PROSITE-ProRule" id="PRU00856"/>
    </source>
</evidence>
<evidence type="ECO:0000256" key="3">
    <source>
        <dbReference type="SAM" id="MobiDB-lite"/>
    </source>
</evidence>
<feature type="chain" id="PRO_0000426029" description="Mini zinc finger protein 1">
    <location>
        <begin position="1"/>
        <end position="105"/>
    </location>
</feature>
<feature type="zinc finger region" description="ZF-HD dimerization-type; degenerate" evidence="2">
    <location>
        <begin position="35"/>
        <end position="84"/>
    </location>
</feature>
<feature type="region of interest" description="Disordered" evidence="3">
    <location>
        <begin position="1"/>
        <end position="29"/>
    </location>
</feature>
<protein>
    <recommendedName>
        <fullName>Mini zinc finger protein 1</fullName>
    </recommendedName>
</protein>
<dbReference type="EMBL" id="CM000136">
    <property type="protein sequence ID" value="EEC67583.1"/>
    <property type="molecule type" value="Genomic_DNA"/>
</dbReference>
<dbReference type="STRING" id="39946.B8BIU8"/>
<dbReference type="EnsemblPlants" id="BGIOSGA034718-TA">
    <property type="protein sequence ID" value="BGIOSGA034718-PA"/>
    <property type="gene ID" value="BGIOSGA034718"/>
</dbReference>
<dbReference type="EnsemblPlants" id="OsGoSa_11g0001810.01">
    <property type="protein sequence ID" value="OsGoSa_11g0001810.01"/>
    <property type="gene ID" value="OsGoSa_11g0001810"/>
</dbReference>
<dbReference type="EnsemblPlants" id="OsIR64_11g0001770.01">
    <property type="protein sequence ID" value="OsIR64_11g0001770.01"/>
    <property type="gene ID" value="OsIR64_11g0001770"/>
</dbReference>
<dbReference type="EnsemblPlants" id="OsKYG_11g0001820.01">
    <property type="protein sequence ID" value="OsKYG_11g0001820.01"/>
    <property type="gene ID" value="OsKYG_11g0001820"/>
</dbReference>
<dbReference type="EnsemblPlants" id="OsLaMu_11g0001810.01">
    <property type="protein sequence ID" value="OsLaMu_11g0001810.01"/>
    <property type="gene ID" value="OsLaMu_11g0001810"/>
</dbReference>
<dbReference type="EnsemblPlants" id="OsLima_11g0001650.01">
    <property type="protein sequence ID" value="OsLima_11g0001650.01"/>
    <property type="gene ID" value="OsLima_11g0001650"/>
</dbReference>
<dbReference type="EnsemblPlants" id="OsLiXu_11g0001740.01">
    <property type="protein sequence ID" value="OsLiXu_11g0001740.01"/>
    <property type="gene ID" value="OsLiXu_11g0001740"/>
</dbReference>
<dbReference type="EnsemblPlants" id="OsMH63_11G001780_01">
    <property type="protein sequence ID" value="OsMH63_11G001780_01"/>
    <property type="gene ID" value="OsMH63_11G001780"/>
</dbReference>
<dbReference type="EnsemblPlants" id="OsPr106_11g0001760.01">
    <property type="protein sequence ID" value="OsPr106_11g0001760.01"/>
    <property type="gene ID" value="OsPr106_11g0001760"/>
</dbReference>
<dbReference type="EnsemblPlants" id="OsZS97_11G001750_01">
    <property type="protein sequence ID" value="OsZS97_11G001750_01"/>
    <property type="gene ID" value="OsZS97_11G001750"/>
</dbReference>
<dbReference type="Gramene" id="BGIOSGA034718-TA">
    <property type="protein sequence ID" value="BGIOSGA034718-PA"/>
    <property type="gene ID" value="BGIOSGA034718"/>
</dbReference>
<dbReference type="Gramene" id="OsGoSa_11g0001810.01">
    <property type="protein sequence ID" value="OsGoSa_11g0001810.01"/>
    <property type="gene ID" value="OsGoSa_11g0001810"/>
</dbReference>
<dbReference type="Gramene" id="OsIR64_11g0001770.01">
    <property type="protein sequence ID" value="OsIR64_11g0001770.01"/>
    <property type="gene ID" value="OsIR64_11g0001770"/>
</dbReference>
<dbReference type="Gramene" id="OsKYG_11g0001820.01">
    <property type="protein sequence ID" value="OsKYG_11g0001820.01"/>
    <property type="gene ID" value="OsKYG_11g0001820"/>
</dbReference>
<dbReference type="Gramene" id="OsLaMu_11g0001810.01">
    <property type="protein sequence ID" value="OsLaMu_11g0001810.01"/>
    <property type="gene ID" value="OsLaMu_11g0001810"/>
</dbReference>
<dbReference type="Gramene" id="OsLima_11g0001650.01">
    <property type="protein sequence ID" value="OsLima_11g0001650.01"/>
    <property type="gene ID" value="OsLima_11g0001650"/>
</dbReference>
<dbReference type="Gramene" id="OsLiXu_11g0001740.01">
    <property type="protein sequence ID" value="OsLiXu_11g0001740.01"/>
    <property type="gene ID" value="OsLiXu_11g0001740"/>
</dbReference>
<dbReference type="Gramene" id="OsMH63_11G001780_01">
    <property type="protein sequence ID" value="OsMH63_11G001780_01"/>
    <property type="gene ID" value="OsMH63_11G001780"/>
</dbReference>
<dbReference type="Gramene" id="OsPr106_11g0001760.01">
    <property type="protein sequence ID" value="OsPr106_11g0001760.01"/>
    <property type="gene ID" value="OsPr106_11g0001760"/>
</dbReference>
<dbReference type="Gramene" id="OsZS97_11G001750_01">
    <property type="protein sequence ID" value="OsZS97_11G001750_01"/>
    <property type="gene ID" value="OsZS97_11G001750"/>
</dbReference>
<dbReference type="HOGENOM" id="CLU_123565_2_0_1"/>
<dbReference type="OMA" id="QAPRRCE"/>
<dbReference type="OrthoDB" id="682018at2759"/>
<dbReference type="Proteomes" id="UP000007015">
    <property type="component" value="Chromosome 11"/>
</dbReference>
<dbReference type="GO" id="GO:0005737">
    <property type="term" value="C:cytoplasm"/>
    <property type="evidence" value="ECO:0007669"/>
    <property type="project" value="UniProtKB-SubCell"/>
</dbReference>
<dbReference type="GO" id="GO:0005634">
    <property type="term" value="C:nucleus"/>
    <property type="evidence" value="ECO:0007669"/>
    <property type="project" value="TreeGrafter"/>
</dbReference>
<dbReference type="GO" id="GO:0003700">
    <property type="term" value="F:DNA-binding transcription factor activity"/>
    <property type="evidence" value="ECO:0007669"/>
    <property type="project" value="TreeGrafter"/>
</dbReference>
<dbReference type="GO" id="GO:0000976">
    <property type="term" value="F:transcription cis-regulatory region binding"/>
    <property type="evidence" value="ECO:0007669"/>
    <property type="project" value="TreeGrafter"/>
</dbReference>
<dbReference type="GO" id="GO:0008270">
    <property type="term" value="F:zinc ion binding"/>
    <property type="evidence" value="ECO:0007669"/>
    <property type="project" value="UniProtKB-KW"/>
</dbReference>
<dbReference type="GO" id="GO:0050793">
    <property type="term" value="P:regulation of developmental process"/>
    <property type="evidence" value="ECO:0007669"/>
    <property type="project" value="TreeGrafter"/>
</dbReference>
<dbReference type="InterPro" id="IPR006456">
    <property type="entry name" value="ZF_HD_homeobox_Cys/His_dimer"/>
</dbReference>
<dbReference type="NCBIfam" id="TIGR01566">
    <property type="entry name" value="ZF_HD_prot_N"/>
    <property type="match status" value="1"/>
</dbReference>
<dbReference type="PANTHER" id="PTHR31948:SF162">
    <property type="entry name" value="MINI ZINC FINGER PROTEIN 2"/>
    <property type="match status" value="1"/>
</dbReference>
<dbReference type="PANTHER" id="PTHR31948">
    <property type="entry name" value="ZINC-FINGER HOMEODOMAIN PROTEIN 2"/>
    <property type="match status" value="1"/>
</dbReference>
<dbReference type="Pfam" id="PF04770">
    <property type="entry name" value="ZF-HD_dimer"/>
    <property type="match status" value="1"/>
</dbReference>
<dbReference type="PROSITE" id="PS51523">
    <property type="entry name" value="ZF_HD_DIMER"/>
    <property type="match status" value="1"/>
</dbReference>
<gene>
    <name type="primary">MIF1</name>
    <name type="ORF">OsI_34942</name>
</gene>
<organism>
    <name type="scientific">Oryza sativa subsp. indica</name>
    <name type="common">Rice</name>
    <dbReference type="NCBI Taxonomy" id="39946"/>
    <lineage>
        <taxon>Eukaryota</taxon>
        <taxon>Viridiplantae</taxon>
        <taxon>Streptophyta</taxon>
        <taxon>Embryophyta</taxon>
        <taxon>Tracheophyta</taxon>
        <taxon>Spermatophyta</taxon>
        <taxon>Magnoliopsida</taxon>
        <taxon>Liliopsida</taxon>
        <taxon>Poales</taxon>
        <taxon>Poaceae</taxon>
        <taxon>BOP clade</taxon>
        <taxon>Oryzoideae</taxon>
        <taxon>Oryzeae</taxon>
        <taxon>Oryzinae</taxon>
        <taxon>Oryza</taxon>
        <taxon>Oryza sativa</taxon>
    </lineage>
</organism>
<comment type="function">
    <text evidence="1">Inhibits zinc finger homeodomain (ZHD) transcription factors, by interacting with them to prevent both their nuclear localization and their DNA-binding properties.</text>
</comment>
<comment type="subunit">
    <text evidence="1">Homo- and heterodimers.</text>
</comment>
<comment type="subcellular location">
    <subcellularLocation>
        <location evidence="1">Cytoplasm</location>
    </subcellularLocation>
</comment>
<sequence>MGPQQDRSAAKPYANGSTAAAAAAGRKENNKVVRYRECQRNHAASIGGHAVDGCREFMASGAEGTAAALLCAACGCHRSFHRREVEAAAAECDCSSDTSSGTGRR</sequence>
<name>MIF1_ORYSI</name>
<proteinExistence type="inferred from homology"/>
<accession>B8BIU8</accession>
<keyword id="KW-0963">Cytoplasm</keyword>
<keyword id="KW-0479">Metal-binding</keyword>
<keyword id="KW-1185">Reference proteome</keyword>
<keyword id="KW-0862">Zinc</keyword>
<keyword id="KW-0863">Zinc-finger</keyword>